<name>COX2_DROMI</name>
<gene>
    <name type="primary">mt:CoII</name>
    <name type="synonym">CoII</name>
</gene>
<evidence type="ECO:0000250" key="1">
    <source>
        <dbReference type="UniProtKB" id="P00410"/>
    </source>
</evidence>
<evidence type="ECO:0000255" key="2"/>
<evidence type="ECO:0000305" key="3"/>
<keyword id="KW-0186">Copper</keyword>
<keyword id="KW-0249">Electron transport</keyword>
<keyword id="KW-0460">Magnesium</keyword>
<keyword id="KW-0472">Membrane</keyword>
<keyword id="KW-0479">Metal-binding</keyword>
<keyword id="KW-0496">Mitochondrion</keyword>
<keyword id="KW-0999">Mitochondrion inner membrane</keyword>
<keyword id="KW-0679">Respiratory chain</keyword>
<keyword id="KW-1278">Translocase</keyword>
<keyword id="KW-0812">Transmembrane</keyword>
<keyword id="KW-1133">Transmembrane helix</keyword>
<keyword id="KW-0813">Transport</keyword>
<accession>P67797</accession>
<accession>P29864</accession>
<feature type="chain" id="PRO_0000183580" description="Cytochrome c oxidase subunit 2">
    <location>
        <begin position="1"/>
        <end position="229"/>
    </location>
</feature>
<feature type="topological domain" description="Mitochondrial intermembrane" evidence="2">
    <location>
        <begin position="1"/>
        <end position="26"/>
    </location>
</feature>
<feature type="transmembrane region" description="Helical" evidence="2">
    <location>
        <begin position="27"/>
        <end position="48"/>
    </location>
</feature>
<feature type="topological domain" description="Mitochondrial matrix" evidence="2">
    <location>
        <begin position="49"/>
        <end position="62"/>
    </location>
</feature>
<feature type="transmembrane region" description="Helical" evidence="2">
    <location>
        <begin position="63"/>
        <end position="82"/>
    </location>
</feature>
<feature type="topological domain" description="Mitochondrial intermembrane" evidence="2">
    <location>
        <begin position="83"/>
        <end position="229"/>
    </location>
</feature>
<feature type="binding site" evidence="1">
    <location>
        <position position="161"/>
    </location>
    <ligand>
        <name>Cu cation</name>
        <dbReference type="ChEBI" id="CHEBI:23378"/>
        <label>A1</label>
    </ligand>
</feature>
<feature type="binding site" evidence="1">
    <location>
        <position position="196"/>
    </location>
    <ligand>
        <name>Cu cation</name>
        <dbReference type="ChEBI" id="CHEBI:23378"/>
        <label>A1</label>
    </ligand>
</feature>
<feature type="binding site" evidence="1">
    <location>
        <position position="196"/>
    </location>
    <ligand>
        <name>Cu cation</name>
        <dbReference type="ChEBI" id="CHEBI:23378"/>
        <label>A2</label>
    </ligand>
</feature>
<feature type="binding site" evidence="1">
    <location>
        <position position="198"/>
    </location>
    <ligand>
        <name>Cu cation</name>
        <dbReference type="ChEBI" id="CHEBI:23378"/>
        <label>A2</label>
    </ligand>
</feature>
<feature type="binding site" evidence="1">
    <location>
        <position position="198"/>
    </location>
    <ligand>
        <name>Mg(2+)</name>
        <dbReference type="ChEBI" id="CHEBI:18420"/>
        <note>ligand shared with subunit 1</note>
    </ligand>
</feature>
<feature type="binding site" evidence="1">
    <location>
        <position position="200"/>
    </location>
    <ligand>
        <name>Cu cation</name>
        <dbReference type="ChEBI" id="CHEBI:23378"/>
        <label>A1</label>
    </ligand>
</feature>
<feature type="binding site" evidence="1">
    <location>
        <position position="200"/>
    </location>
    <ligand>
        <name>Cu cation</name>
        <dbReference type="ChEBI" id="CHEBI:23378"/>
        <label>A2</label>
    </ligand>
</feature>
<feature type="binding site" evidence="1">
    <location>
        <position position="204"/>
    </location>
    <ligand>
        <name>Cu cation</name>
        <dbReference type="ChEBI" id="CHEBI:23378"/>
        <label>A2</label>
    </ligand>
</feature>
<feature type="binding site" evidence="1">
    <location>
        <position position="207"/>
    </location>
    <ligand>
        <name>Cu cation</name>
        <dbReference type="ChEBI" id="CHEBI:23378"/>
        <label>A1</label>
    </ligand>
</feature>
<sequence length="229" mass="26264">MSTWANLGLQDSASPLMEQLIFFHDHALLILVMITVLVGYLMFMLFFNSYVNRFLLHGQLIEMIWTILPAIILLFIAMPSLRLLYLLDEINEPSITLKSIGHQWYWSYEYSDFNNVEFDSYMIPTNELSNDGFRLLDVDNRIVLPMNSQIRILVTAADVIHSWTVPALGVKVDGTPGRLNQTNFFINRPGLFYGQCSEICGANHSFMPIVIESVPVNYFIKWISNSVNS</sequence>
<proteinExistence type="inferred from homology"/>
<reference key="1">
    <citation type="journal article" date="1993" name="Mol. Biol. Evol.">
        <title>Relationships in the Drosophila obscura species group, inferred from mitochondrial cytochrome oxidase II sequences.</title>
        <authorList>
            <person name="Beckenbach A.T."/>
            <person name="Wei Y.W."/>
            <person name="Liu H."/>
        </authorList>
    </citation>
    <scope>NUCLEOTIDE SEQUENCE [GENOMIC DNA]</scope>
</reference>
<organism>
    <name type="scientific">Drosophila miranda</name>
    <name type="common">Fruit fly</name>
    <dbReference type="NCBI Taxonomy" id="7229"/>
    <lineage>
        <taxon>Eukaryota</taxon>
        <taxon>Metazoa</taxon>
        <taxon>Ecdysozoa</taxon>
        <taxon>Arthropoda</taxon>
        <taxon>Hexapoda</taxon>
        <taxon>Insecta</taxon>
        <taxon>Pterygota</taxon>
        <taxon>Neoptera</taxon>
        <taxon>Endopterygota</taxon>
        <taxon>Diptera</taxon>
        <taxon>Brachycera</taxon>
        <taxon>Muscomorpha</taxon>
        <taxon>Ephydroidea</taxon>
        <taxon>Drosophilidae</taxon>
        <taxon>Drosophila</taxon>
        <taxon>Sophophora</taxon>
    </lineage>
</organism>
<geneLocation type="mitochondrion"/>
<comment type="function">
    <text evidence="1">Component of the cytochrome c oxidase, the last enzyme in the mitochondrial electron transport chain which drives oxidative phosphorylation. The respiratory chain contains 3 multisubunit complexes succinate dehydrogenase (complex II, CII), ubiquinol-cytochrome c oxidoreductase (cytochrome b-c1 complex, complex III, CIII) and cytochrome c oxidase (complex IV, CIV), that cooperate to transfer electrons derived from NADH and succinate to molecular oxygen, creating an electrochemical gradient over the inner membrane that drives transmembrane transport and the ATP synthase. Cytochrome c oxidase is the component of the respiratory chain that catalyzes the reduction of oxygen to water. Electrons originating from reduced cytochrome c in the intermembrane space (IMS) are transferred via the dinuclear copper A center (CU(A)) of subunit 2 and heme A of subunit 1 to the active site in subunit 1, a binuclear center (BNC) formed by heme A3 and copper B (CU(B)). The BNC reduces molecular oxygen to 2 water molecules using 4 electrons from cytochrome c in the IMS and 4 protons from the mitochondrial matrix.</text>
</comment>
<comment type="catalytic activity">
    <reaction evidence="1">
        <text>4 Fe(II)-[cytochrome c] + O2 + 8 H(+)(in) = 4 Fe(III)-[cytochrome c] + 2 H2O + 4 H(+)(out)</text>
        <dbReference type="Rhea" id="RHEA:11436"/>
        <dbReference type="Rhea" id="RHEA-COMP:10350"/>
        <dbReference type="Rhea" id="RHEA-COMP:14399"/>
        <dbReference type="ChEBI" id="CHEBI:15377"/>
        <dbReference type="ChEBI" id="CHEBI:15378"/>
        <dbReference type="ChEBI" id="CHEBI:15379"/>
        <dbReference type="ChEBI" id="CHEBI:29033"/>
        <dbReference type="ChEBI" id="CHEBI:29034"/>
        <dbReference type="EC" id="7.1.1.9"/>
    </reaction>
    <physiologicalReaction direction="left-to-right" evidence="1">
        <dbReference type="Rhea" id="RHEA:11437"/>
    </physiologicalReaction>
</comment>
<comment type="cofactor">
    <cofactor evidence="1">
        <name>Cu cation</name>
        <dbReference type="ChEBI" id="CHEBI:23378"/>
    </cofactor>
    <text evidence="1">Binds a dinuclear copper A center per subunit.</text>
</comment>
<comment type="subunit">
    <text evidence="1">Component of the cytochrome c oxidase (complex IV, CIV), a multisubunit enzyme composed of a catalytic core of 3 subunits and several supernumerary subunits. The complex exists as a monomer or a dimer and forms supercomplexes (SCs) in the inner mitochondrial membrane with ubiquinol-cytochrome c oxidoreductase (cytochrome b-c1 complex, complex III, CIII).</text>
</comment>
<comment type="subcellular location">
    <subcellularLocation>
        <location evidence="1">Mitochondrion inner membrane</location>
        <topology evidence="1">Multi-pass membrane protein</topology>
    </subcellularLocation>
</comment>
<comment type="similarity">
    <text evidence="3">Belongs to the cytochrome c oxidase subunit 2 family.</text>
</comment>
<protein>
    <recommendedName>
        <fullName>Cytochrome c oxidase subunit 2</fullName>
        <ecNumber>7.1.1.9</ecNumber>
    </recommendedName>
    <alternativeName>
        <fullName>Cytochrome c oxidase polypeptide II</fullName>
    </alternativeName>
</protein>
<dbReference type="EC" id="7.1.1.9"/>
<dbReference type="EMBL" id="M95148">
    <property type="protein sequence ID" value="AAA02778.2"/>
    <property type="molecule type" value="Genomic_DNA"/>
</dbReference>
<dbReference type="SMR" id="P67797"/>
<dbReference type="GO" id="GO:0005743">
    <property type="term" value="C:mitochondrial inner membrane"/>
    <property type="evidence" value="ECO:0007669"/>
    <property type="project" value="UniProtKB-SubCell"/>
</dbReference>
<dbReference type="GO" id="GO:0005507">
    <property type="term" value="F:copper ion binding"/>
    <property type="evidence" value="ECO:0007669"/>
    <property type="project" value="InterPro"/>
</dbReference>
<dbReference type="GO" id="GO:0004129">
    <property type="term" value="F:cytochrome-c oxidase activity"/>
    <property type="evidence" value="ECO:0007669"/>
    <property type="project" value="UniProtKB-EC"/>
</dbReference>
<dbReference type="GO" id="GO:0042773">
    <property type="term" value="P:ATP synthesis coupled electron transport"/>
    <property type="evidence" value="ECO:0007669"/>
    <property type="project" value="TreeGrafter"/>
</dbReference>
<dbReference type="CDD" id="cd13912">
    <property type="entry name" value="CcO_II_C"/>
    <property type="match status" value="1"/>
</dbReference>
<dbReference type="FunFam" id="1.10.287.90:FF:000006">
    <property type="entry name" value="Cytochrome c oxidase subunit 2"/>
    <property type="match status" value="1"/>
</dbReference>
<dbReference type="FunFam" id="2.60.40.420:FF:000001">
    <property type="entry name" value="Cytochrome c oxidase subunit 2"/>
    <property type="match status" value="1"/>
</dbReference>
<dbReference type="Gene3D" id="1.10.287.90">
    <property type="match status" value="1"/>
</dbReference>
<dbReference type="Gene3D" id="2.60.40.420">
    <property type="entry name" value="Cupredoxins - blue copper proteins"/>
    <property type="match status" value="1"/>
</dbReference>
<dbReference type="InterPro" id="IPR045187">
    <property type="entry name" value="CcO_II"/>
</dbReference>
<dbReference type="InterPro" id="IPR002429">
    <property type="entry name" value="CcO_II-like_C"/>
</dbReference>
<dbReference type="InterPro" id="IPR034210">
    <property type="entry name" value="CcO_II_C"/>
</dbReference>
<dbReference type="InterPro" id="IPR001505">
    <property type="entry name" value="Copper_CuA"/>
</dbReference>
<dbReference type="InterPro" id="IPR008972">
    <property type="entry name" value="Cupredoxin"/>
</dbReference>
<dbReference type="InterPro" id="IPR014222">
    <property type="entry name" value="Cyt_c_oxidase_su2"/>
</dbReference>
<dbReference type="InterPro" id="IPR011759">
    <property type="entry name" value="Cyt_c_oxidase_su2_TM_dom"/>
</dbReference>
<dbReference type="InterPro" id="IPR036257">
    <property type="entry name" value="Cyt_c_oxidase_su2_TM_sf"/>
</dbReference>
<dbReference type="NCBIfam" id="TIGR02866">
    <property type="entry name" value="CoxB"/>
    <property type="match status" value="1"/>
</dbReference>
<dbReference type="PANTHER" id="PTHR22888:SF9">
    <property type="entry name" value="CYTOCHROME C OXIDASE SUBUNIT 2"/>
    <property type="match status" value="1"/>
</dbReference>
<dbReference type="PANTHER" id="PTHR22888">
    <property type="entry name" value="CYTOCHROME C OXIDASE, SUBUNIT II"/>
    <property type="match status" value="1"/>
</dbReference>
<dbReference type="Pfam" id="PF00116">
    <property type="entry name" value="COX2"/>
    <property type="match status" value="1"/>
</dbReference>
<dbReference type="Pfam" id="PF02790">
    <property type="entry name" value="COX2_TM"/>
    <property type="match status" value="1"/>
</dbReference>
<dbReference type="PRINTS" id="PR01166">
    <property type="entry name" value="CYCOXIDASEII"/>
</dbReference>
<dbReference type="SUPFAM" id="SSF49503">
    <property type="entry name" value="Cupredoxins"/>
    <property type="match status" value="1"/>
</dbReference>
<dbReference type="SUPFAM" id="SSF81464">
    <property type="entry name" value="Cytochrome c oxidase subunit II-like, transmembrane region"/>
    <property type="match status" value="1"/>
</dbReference>
<dbReference type="PROSITE" id="PS00078">
    <property type="entry name" value="COX2"/>
    <property type="match status" value="1"/>
</dbReference>
<dbReference type="PROSITE" id="PS50857">
    <property type="entry name" value="COX2_CUA"/>
    <property type="match status" value="1"/>
</dbReference>
<dbReference type="PROSITE" id="PS50999">
    <property type="entry name" value="COX2_TM"/>
    <property type="match status" value="1"/>
</dbReference>